<gene>
    <name type="primary">OR2T12</name>
</gene>
<dbReference type="EMBL" id="AB065960">
    <property type="protein sequence ID" value="BAC06172.1"/>
    <property type="molecule type" value="Genomic_DNA"/>
</dbReference>
<dbReference type="EMBL" id="AL450303">
    <property type="status" value="NOT_ANNOTATED_CDS"/>
    <property type="molecule type" value="Genomic_DNA"/>
</dbReference>
<dbReference type="EMBL" id="BK004485">
    <property type="protein sequence ID" value="DAA04883.1"/>
    <property type="molecule type" value="Genomic_DNA"/>
</dbReference>
<dbReference type="CCDS" id="CCDS31110.1"/>
<dbReference type="RefSeq" id="NP_001004692.1">
    <property type="nucleotide sequence ID" value="NM_001004692.2"/>
</dbReference>
<dbReference type="SMR" id="Q8NG77"/>
<dbReference type="BioGRID" id="126034">
    <property type="interactions" value="1"/>
</dbReference>
<dbReference type="FunCoup" id="Q8NG77">
    <property type="interactions" value="459"/>
</dbReference>
<dbReference type="IntAct" id="Q8NG77">
    <property type="interactions" value="1"/>
</dbReference>
<dbReference type="STRING" id="9606.ENSP00000493000"/>
<dbReference type="GlyCosmos" id="Q8NG77">
    <property type="glycosylation" value="1 site, No reported glycans"/>
</dbReference>
<dbReference type="GlyGen" id="Q8NG77">
    <property type="glycosylation" value="1 site"/>
</dbReference>
<dbReference type="BioMuta" id="OR2T12"/>
<dbReference type="DMDM" id="71153027"/>
<dbReference type="MassIVE" id="Q8NG77"/>
<dbReference type="PaxDb" id="9606-ENSP00000324583"/>
<dbReference type="Antibodypedia" id="71735">
    <property type="antibodies" value="23 antibodies from 9 providers"/>
</dbReference>
<dbReference type="DNASU" id="127064"/>
<dbReference type="Ensembl" id="ENST00000641276.1">
    <property type="protein sequence ID" value="ENSP00000493000.1"/>
    <property type="gene ID" value="ENSG00000177201.3"/>
</dbReference>
<dbReference type="GeneID" id="127064"/>
<dbReference type="KEGG" id="hsa:127064"/>
<dbReference type="MANE-Select" id="ENST00000641276.1">
    <property type="protein sequence ID" value="ENSP00000493000.1"/>
    <property type="RefSeq nucleotide sequence ID" value="NM_001004692.2"/>
    <property type="RefSeq protein sequence ID" value="NP_001004692.1"/>
</dbReference>
<dbReference type="UCSC" id="uc010pzj.2">
    <property type="organism name" value="human"/>
</dbReference>
<dbReference type="AGR" id="HGNC:19592"/>
<dbReference type="CTD" id="127064"/>
<dbReference type="DisGeNET" id="127064"/>
<dbReference type="GeneCards" id="OR2T12"/>
<dbReference type="HGNC" id="HGNC:19592">
    <property type="gene designation" value="OR2T12"/>
</dbReference>
<dbReference type="HPA" id="ENSG00000177201">
    <property type="expression patterns" value="Not detected"/>
</dbReference>
<dbReference type="neXtProt" id="NX_Q8NG77"/>
<dbReference type="PharmGKB" id="PA134941840"/>
<dbReference type="VEuPathDB" id="HostDB:ENSG00000177201"/>
<dbReference type="eggNOG" id="ENOG502RU0Z">
    <property type="taxonomic scope" value="Eukaryota"/>
</dbReference>
<dbReference type="GeneTree" id="ENSGT01130000278260"/>
<dbReference type="HOGENOM" id="CLU_012526_1_0_1"/>
<dbReference type="InParanoid" id="Q8NG77"/>
<dbReference type="OMA" id="FCNAHEI"/>
<dbReference type="OrthoDB" id="10017003at2759"/>
<dbReference type="PAN-GO" id="Q8NG77">
    <property type="GO annotations" value="0 GO annotations based on evolutionary models"/>
</dbReference>
<dbReference type="PhylomeDB" id="Q8NG77"/>
<dbReference type="TreeFam" id="TF337295"/>
<dbReference type="PathwayCommons" id="Q8NG77"/>
<dbReference type="Reactome" id="R-HSA-9752946">
    <property type="pathway name" value="Expression and translocation of olfactory receptors"/>
</dbReference>
<dbReference type="SignaLink" id="Q8NG77"/>
<dbReference type="BioGRID-ORCS" id="127064">
    <property type="hits" value="5 hits in 678 CRISPR screens"/>
</dbReference>
<dbReference type="GeneWiki" id="OR2T12"/>
<dbReference type="GenomeRNAi" id="127064"/>
<dbReference type="Pharos" id="Q8NG77">
    <property type="development level" value="Tdark"/>
</dbReference>
<dbReference type="PRO" id="PR:Q8NG77"/>
<dbReference type="Proteomes" id="UP000005640">
    <property type="component" value="Chromosome 1"/>
</dbReference>
<dbReference type="RNAct" id="Q8NG77">
    <property type="molecule type" value="protein"/>
</dbReference>
<dbReference type="Bgee" id="ENSG00000177201">
    <property type="expression patterns" value="Expressed in primordial germ cell in gonad"/>
</dbReference>
<dbReference type="GO" id="GO:0005886">
    <property type="term" value="C:plasma membrane"/>
    <property type="evidence" value="ECO:0000318"/>
    <property type="project" value="GO_Central"/>
</dbReference>
<dbReference type="GO" id="GO:0004930">
    <property type="term" value="F:G protein-coupled receptor activity"/>
    <property type="evidence" value="ECO:0007669"/>
    <property type="project" value="UniProtKB-KW"/>
</dbReference>
<dbReference type="GO" id="GO:0004984">
    <property type="term" value="F:olfactory receptor activity"/>
    <property type="evidence" value="ECO:0000318"/>
    <property type="project" value="GO_Central"/>
</dbReference>
<dbReference type="GO" id="GO:0050911">
    <property type="term" value="P:detection of chemical stimulus involved in sensory perception of smell"/>
    <property type="evidence" value="ECO:0000318"/>
    <property type="project" value="GO_Central"/>
</dbReference>
<dbReference type="CDD" id="cd15421">
    <property type="entry name" value="7tmA_OR2T-like"/>
    <property type="match status" value="1"/>
</dbReference>
<dbReference type="FunFam" id="1.20.1070.10:FF:000008">
    <property type="entry name" value="Olfactory receptor"/>
    <property type="match status" value="1"/>
</dbReference>
<dbReference type="Gene3D" id="1.20.1070.10">
    <property type="entry name" value="Rhodopsin 7-helix transmembrane proteins"/>
    <property type="match status" value="1"/>
</dbReference>
<dbReference type="InterPro" id="IPR000276">
    <property type="entry name" value="GPCR_Rhodpsn"/>
</dbReference>
<dbReference type="InterPro" id="IPR017452">
    <property type="entry name" value="GPCR_Rhodpsn_7TM"/>
</dbReference>
<dbReference type="InterPro" id="IPR000725">
    <property type="entry name" value="Olfact_rcpt"/>
</dbReference>
<dbReference type="PANTHER" id="PTHR26453">
    <property type="entry name" value="OLFACTORY RECEPTOR"/>
    <property type="match status" value="1"/>
</dbReference>
<dbReference type="Pfam" id="PF13853">
    <property type="entry name" value="7tm_4"/>
    <property type="match status" value="1"/>
</dbReference>
<dbReference type="PRINTS" id="PR00237">
    <property type="entry name" value="GPCRRHODOPSN"/>
</dbReference>
<dbReference type="PRINTS" id="PR00245">
    <property type="entry name" value="OLFACTORYR"/>
</dbReference>
<dbReference type="SUPFAM" id="SSF81321">
    <property type="entry name" value="Family A G protein-coupled receptor-like"/>
    <property type="match status" value="1"/>
</dbReference>
<dbReference type="PROSITE" id="PS00237">
    <property type="entry name" value="G_PROTEIN_RECEP_F1_1"/>
    <property type="match status" value="1"/>
</dbReference>
<dbReference type="PROSITE" id="PS50262">
    <property type="entry name" value="G_PROTEIN_RECEP_F1_2"/>
    <property type="match status" value="1"/>
</dbReference>
<proteinExistence type="inferred from homology"/>
<feature type="chain" id="PRO_0000150504" description="Olfactory receptor 2T12">
    <location>
        <begin position="1"/>
        <end position="320"/>
    </location>
</feature>
<feature type="topological domain" description="Extracellular" evidence="1">
    <location>
        <begin position="1"/>
        <end position="23"/>
    </location>
</feature>
<feature type="transmembrane region" description="Helical; Name=1" evidence="1">
    <location>
        <begin position="24"/>
        <end position="47"/>
    </location>
</feature>
<feature type="topological domain" description="Cytoplasmic" evidence="1">
    <location>
        <begin position="48"/>
        <end position="55"/>
    </location>
</feature>
<feature type="transmembrane region" description="Helical; Name=2" evidence="1">
    <location>
        <begin position="56"/>
        <end position="77"/>
    </location>
</feature>
<feature type="topological domain" description="Extracellular" evidence="1">
    <location>
        <begin position="78"/>
        <end position="98"/>
    </location>
</feature>
<feature type="transmembrane region" description="Helical; Name=3" evidence="1">
    <location>
        <begin position="99"/>
        <end position="118"/>
    </location>
</feature>
<feature type="topological domain" description="Cytoplasmic" evidence="1">
    <location>
        <begin position="119"/>
        <end position="137"/>
    </location>
</feature>
<feature type="transmembrane region" description="Helical; Name=4" evidence="1">
    <location>
        <begin position="138"/>
        <end position="156"/>
    </location>
</feature>
<feature type="topological domain" description="Extracellular" evidence="1">
    <location>
        <begin position="157"/>
        <end position="193"/>
    </location>
</feature>
<feature type="transmembrane region" description="Helical; Name=5" evidence="1">
    <location>
        <begin position="194"/>
        <end position="217"/>
    </location>
</feature>
<feature type="topological domain" description="Cytoplasmic" evidence="1">
    <location>
        <begin position="218"/>
        <end position="234"/>
    </location>
</feature>
<feature type="transmembrane region" description="Helical; Name=6" evidence="1">
    <location>
        <begin position="235"/>
        <end position="257"/>
    </location>
</feature>
<feature type="topological domain" description="Extracellular" evidence="1">
    <location>
        <begin position="258"/>
        <end position="270"/>
    </location>
</feature>
<feature type="transmembrane region" description="Helical; Name=7" evidence="1">
    <location>
        <begin position="271"/>
        <end position="290"/>
    </location>
</feature>
<feature type="topological domain" description="Cytoplasmic" evidence="1">
    <location>
        <begin position="291"/>
        <end position="320"/>
    </location>
</feature>
<feature type="glycosylation site" description="N-linked (GlcNAc...) asparagine" evidence="1">
    <location>
        <position position="17"/>
    </location>
</feature>
<feature type="disulfide bond" evidence="2">
    <location>
        <begin position="95"/>
        <end position="187"/>
    </location>
</feature>
<feature type="sequence variant" id="VAR_060003" description="In dbSNP:rs12135684.">
    <original>A</original>
    <variation>S</variation>
    <location>
        <position position="41"/>
    </location>
</feature>
<feature type="sequence variant" id="VAR_060004" description="In dbSNP:rs6678138.">
    <original>M</original>
    <variation>V</variation>
    <location>
        <position position="69"/>
    </location>
</feature>
<feature type="sequence variant" id="VAR_060005" description="In dbSNP:rs12137982.">
    <original>T</original>
    <variation>S</variation>
    <location>
        <position position="104"/>
    </location>
</feature>
<feature type="sequence variant" id="VAR_053157" description="In dbSNP:rs11204625.">
    <original>K</original>
    <variation>N</variation>
    <location>
        <position position="296"/>
    </location>
</feature>
<feature type="sequence variant" id="VAR_060006" description="In dbSNP:rs6667171.">
    <original>R</original>
    <variation>L</variation>
    <location>
        <position position="301"/>
    </location>
</feature>
<sequence length="320" mass="35946">MEMRNTTPDFILLGLFNHTRAHQVLFMMLLATVLTSLFSNALMILLIHWDHRLHRPMYFLLSQLSLMDMMLVSTTVPKMAADYLTGNKAISRAGCGVQIFFLPTLGGGECFLLAAMAYDRYAAVCHPLRYPTLMSWQLCLRMTMSSWLLGAADGLLQAVATLSFPYCGAHEIDHFFCEAPVLVRLACADTSVFENAMYICCVLMLLVPFSLILSSYGLILAAVLLMRSTEARKKAFATCSSHVAVVGLFYGAGIFTYMRPKSHRSTNHDKVVSAFYTMFTPLLNPLIYSVRNSEVKEALKRWLGTCVNLKHQQNEAHRSR</sequence>
<reference key="1">
    <citation type="submission" date="2001-07" db="EMBL/GenBank/DDBJ databases">
        <title>Genome-wide discovery and analysis of human seven transmembrane helix receptor genes.</title>
        <authorList>
            <person name="Suwa M."/>
            <person name="Sato T."/>
            <person name="Okouchi I."/>
            <person name="Arita M."/>
            <person name="Futami K."/>
            <person name="Matsumoto S."/>
            <person name="Tsutsumi S."/>
            <person name="Aburatani H."/>
            <person name="Asai K."/>
            <person name="Akiyama Y."/>
        </authorList>
    </citation>
    <scope>NUCLEOTIDE SEQUENCE [GENOMIC DNA]</scope>
</reference>
<reference key="2">
    <citation type="journal article" date="2006" name="Nature">
        <title>The DNA sequence and biological annotation of human chromosome 1.</title>
        <authorList>
            <person name="Gregory S.G."/>
            <person name="Barlow K.F."/>
            <person name="McLay K.E."/>
            <person name="Kaul R."/>
            <person name="Swarbreck D."/>
            <person name="Dunham A."/>
            <person name="Scott C.E."/>
            <person name="Howe K.L."/>
            <person name="Woodfine K."/>
            <person name="Spencer C.C.A."/>
            <person name="Jones M.C."/>
            <person name="Gillson C."/>
            <person name="Searle S."/>
            <person name="Zhou Y."/>
            <person name="Kokocinski F."/>
            <person name="McDonald L."/>
            <person name="Evans R."/>
            <person name="Phillips K."/>
            <person name="Atkinson A."/>
            <person name="Cooper R."/>
            <person name="Jones C."/>
            <person name="Hall R.E."/>
            <person name="Andrews T.D."/>
            <person name="Lloyd C."/>
            <person name="Ainscough R."/>
            <person name="Almeida J.P."/>
            <person name="Ambrose K.D."/>
            <person name="Anderson F."/>
            <person name="Andrew R.W."/>
            <person name="Ashwell R.I.S."/>
            <person name="Aubin K."/>
            <person name="Babbage A.K."/>
            <person name="Bagguley C.L."/>
            <person name="Bailey J."/>
            <person name="Beasley H."/>
            <person name="Bethel G."/>
            <person name="Bird C.P."/>
            <person name="Bray-Allen S."/>
            <person name="Brown J.Y."/>
            <person name="Brown A.J."/>
            <person name="Buckley D."/>
            <person name="Burton J."/>
            <person name="Bye J."/>
            <person name="Carder C."/>
            <person name="Chapman J.C."/>
            <person name="Clark S.Y."/>
            <person name="Clarke G."/>
            <person name="Clee C."/>
            <person name="Cobley V."/>
            <person name="Collier R.E."/>
            <person name="Corby N."/>
            <person name="Coville G.J."/>
            <person name="Davies J."/>
            <person name="Deadman R."/>
            <person name="Dunn M."/>
            <person name="Earthrowl M."/>
            <person name="Ellington A.G."/>
            <person name="Errington H."/>
            <person name="Frankish A."/>
            <person name="Frankland J."/>
            <person name="French L."/>
            <person name="Garner P."/>
            <person name="Garnett J."/>
            <person name="Gay L."/>
            <person name="Ghori M.R.J."/>
            <person name="Gibson R."/>
            <person name="Gilby L.M."/>
            <person name="Gillett W."/>
            <person name="Glithero R.J."/>
            <person name="Grafham D.V."/>
            <person name="Griffiths C."/>
            <person name="Griffiths-Jones S."/>
            <person name="Grocock R."/>
            <person name="Hammond S."/>
            <person name="Harrison E.S.I."/>
            <person name="Hart E."/>
            <person name="Haugen E."/>
            <person name="Heath P.D."/>
            <person name="Holmes S."/>
            <person name="Holt K."/>
            <person name="Howden P.J."/>
            <person name="Hunt A.R."/>
            <person name="Hunt S.E."/>
            <person name="Hunter G."/>
            <person name="Isherwood J."/>
            <person name="James R."/>
            <person name="Johnson C."/>
            <person name="Johnson D."/>
            <person name="Joy A."/>
            <person name="Kay M."/>
            <person name="Kershaw J.K."/>
            <person name="Kibukawa M."/>
            <person name="Kimberley A.M."/>
            <person name="King A."/>
            <person name="Knights A.J."/>
            <person name="Lad H."/>
            <person name="Laird G."/>
            <person name="Lawlor S."/>
            <person name="Leongamornlert D.A."/>
            <person name="Lloyd D.M."/>
            <person name="Loveland J."/>
            <person name="Lovell J."/>
            <person name="Lush M.J."/>
            <person name="Lyne R."/>
            <person name="Martin S."/>
            <person name="Mashreghi-Mohammadi M."/>
            <person name="Matthews L."/>
            <person name="Matthews N.S.W."/>
            <person name="McLaren S."/>
            <person name="Milne S."/>
            <person name="Mistry S."/>
            <person name="Moore M.J.F."/>
            <person name="Nickerson T."/>
            <person name="O'Dell C.N."/>
            <person name="Oliver K."/>
            <person name="Palmeiri A."/>
            <person name="Palmer S.A."/>
            <person name="Parker A."/>
            <person name="Patel D."/>
            <person name="Pearce A.V."/>
            <person name="Peck A.I."/>
            <person name="Pelan S."/>
            <person name="Phelps K."/>
            <person name="Phillimore B.J."/>
            <person name="Plumb R."/>
            <person name="Rajan J."/>
            <person name="Raymond C."/>
            <person name="Rouse G."/>
            <person name="Saenphimmachak C."/>
            <person name="Sehra H.K."/>
            <person name="Sheridan E."/>
            <person name="Shownkeen R."/>
            <person name="Sims S."/>
            <person name="Skuce C.D."/>
            <person name="Smith M."/>
            <person name="Steward C."/>
            <person name="Subramanian S."/>
            <person name="Sycamore N."/>
            <person name="Tracey A."/>
            <person name="Tromans A."/>
            <person name="Van Helmond Z."/>
            <person name="Wall M."/>
            <person name="Wallis J.M."/>
            <person name="White S."/>
            <person name="Whitehead S.L."/>
            <person name="Wilkinson J.E."/>
            <person name="Willey D.L."/>
            <person name="Williams H."/>
            <person name="Wilming L."/>
            <person name="Wray P.W."/>
            <person name="Wu Z."/>
            <person name="Coulson A."/>
            <person name="Vaudin M."/>
            <person name="Sulston J.E."/>
            <person name="Durbin R.M."/>
            <person name="Hubbard T."/>
            <person name="Wooster R."/>
            <person name="Dunham I."/>
            <person name="Carter N.P."/>
            <person name="McVean G."/>
            <person name="Ross M.T."/>
            <person name="Harrow J."/>
            <person name="Olson M.V."/>
            <person name="Beck S."/>
            <person name="Rogers J."/>
            <person name="Bentley D.R."/>
        </authorList>
    </citation>
    <scope>NUCLEOTIDE SEQUENCE [LARGE SCALE GENOMIC DNA]</scope>
</reference>
<reference key="3">
    <citation type="journal article" date="2004" name="Proc. Natl. Acad. Sci. U.S.A.">
        <title>The human olfactory receptor gene family.</title>
        <authorList>
            <person name="Malnic B."/>
            <person name="Godfrey P.A."/>
            <person name="Buck L.B."/>
        </authorList>
    </citation>
    <scope>IDENTIFICATION</scope>
</reference>
<reference key="4">
    <citation type="journal article" date="2004" name="Proc. Natl. Acad. Sci. U.S.A.">
        <authorList>
            <person name="Malnic B."/>
            <person name="Godfrey P.A."/>
            <person name="Buck L.B."/>
        </authorList>
    </citation>
    <scope>ERRATUM OF PUBMED:14983052</scope>
</reference>
<organism>
    <name type="scientific">Homo sapiens</name>
    <name type="common">Human</name>
    <dbReference type="NCBI Taxonomy" id="9606"/>
    <lineage>
        <taxon>Eukaryota</taxon>
        <taxon>Metazoa</taxon>
        <taxon>Chordata</taxon>
        <taxon>Craniata</taxon>
        <taxon>Vertebrata</taxon>
        <taxon>Euteleostomi</taxon>
        <taxon>Mammalia</taxon>
        <taxon>Eutheria</taxon>
        <taxon>Euarchontoglires</taxon>
        <taxon>Primates</taxon>
        <taxon>Haplorrhini</taxon>
        <taxon>Catarrhini</taxon>
        <taxon>Hominidae</taxon>
        <taxon>Homo</taxon>
    </lineage>
</organism>
<accession>Q8NG77</accession>
<comment type="function">
    <text evidence="3">Odorant receptor.</text>
</comment>
<comment type="subcellular location">
    <subcellularLocation>
        <location>Cell membrane</location>
        <topology>Multi-pass membrane protein</topology>
    </subcellularLocation>
</comment>
<comment type="similarity">
    <text evidence="2">Belongs to the G-protein coupled receptor 1 family.</text>
</comment>
<comment type="online information" name="Human Olfactory Receptor Data Exploratorium (HORDE)">
    <link uri="http://genome.weizmann.ac.il/horde/card/index/symbol:OR2T12"/>
</comment>
<protein>
    <recommendedName>
        <fullName>Olfactory receptor 2T12</fullName>
    </recommendedName>
    <alternativeName>
        <fullName>Olfactory receptor OR1-57</fullName>
    </alternativeName>
</protein>
<name>O2T12_HUMAN</name>
<evidence type="ECO:0000255" key="1"/>
<evidence type="ECO:0000255" key="2">
    <source>
        <dbReference type="PROSITE-ProRule" id="PRU00521"/>
    </source>
</evidence>
<evidence type="ECO:0000305" key="3"/>
<keyword id="KW-1003">Cell membrane</keyword>
<keyword id="KW-1015">Disulfide bond</keyword>
<keyword id="KW-0297">G-protein coupled receptor</keyword>
<keyword id="KW-0325">Glycoprotein</keyword>
<keyword id="KW-0472">Membrane</keyword>
<keyword id="KW-0552">Olfaction</keyword>
<keyword id="KW-0675">Receptor</keyword>
<keyword id="KW-1185">Reference proteome</keyword>
<keyword id="KW-0716">Sensory transduction</keyword>
<keyword id="KW-0807">Transducer</keyword>
<keyword id="KW-0812">Transmembrane</keyword>
<keyword id="KW-1133">Transmembrane helix</keyword>